<accession>P21905</accession>
<protein>
    <recommendedName>
        <fullName>ATP synthase subunit c, sodium ion specific</fullName>
    </recommendedName>
    <alternativeName>
        <fullName>ATP synthase F(0) sector subunit c</fullName>
    </alternativeName>
    <alternativeName>
        <fullName>F-type ATPase subunit c</fullName>
        <shortName>F-ATPase subunit c</shortName>
    </alternativeName>
    <alternativeName>
        <fullName>Lipid-binding protein</fullName>
    </alternativeName>
</protein>
<feature type="chain" id="PRO_0000112158" description="ATP synthase subunit c, sodium ion specific">
    <location>
        <begin position="1"/>
        <end position="89"/>
    </location>
</feature>
<feature type="transmembrane region" description="Helical" evidence="2">
    <location>
        <begin position="9"/>
        <end position="29"/>
    </location>
</feature>
<feature type="transmembrane region" description="Helical" evidence="2">
    <location>
        <begin position="68"/>
        <end position="88"/>
    </location>
</feature>
<feature type="site" description="Reversibly binds sodium during transport" evidence="1">
    <location>
        <position position="65"/>
    </location>
</feature>
<gene>
    <name type="primary">atpE</name>
    <name type="synonym">uncE</name>
</gene>
<sequence length="89" mass="8731">MDMVLAKTVVLAASAVGAGAAMIAGIGPGVGQGYAAGKAVESVARQPEAKGDIISTMVLGQAIAESTGIYSLVIALILLYANPFVGLLG</sequence>
<dbReference type="EMBL" id="X53845">
    <property type="protein sequence ID" value="CAA37840.1"/>
    <property type="molecule type" value="Genomic_DNA"/>
</dbReference>
<dbReference type="EMBL" id="X66102">
    <property type="protein sequence ID" value="CAA46895.1"/>
    <property type="molecule type" value="Genomic_DNA"/>
</dbReference>
<dbReference type="EMBL" id="X53960">
    <property type="protein sequence ID" value="CAA37912.1"/>
    <property type="molecule type" value="Genomic_DNA"/>
</dbReference>
<dbReference type="EMBL" id="X58461">
    <property type="protein sequence ID" value="CAA41369.1"/>
    <property type="molecule type" value="Genomic_DNA"/>
</dbReference>
<dbReference type="PIR" id="S23322">
    <property type="entry name" value="S23322"/>
</dbReference>
<dbReference type="BMRB" id="P21905"/>
<dbReference type="SMR" id="P21905"/>
<dbReference type="DrugBank" id="DB03143">
    <property type="generic name" value="Nonan-1-Ol"/>
</dbReference>
<dbReference type="TCDB" id="3.A.2.1.2">
    <property type="family name" value="the h+- or na+-translocating f-type, v-type and a-type atpase (f-atpase) superfamily"/>
</dbReference>
<dbReference type="GO" id="GO:0005886">
    <property type="term" value="C:plasma membrane"/>
    <property type="evidence" value="ECO:0007669"/>
    <property type="project" value="UniProtKB-SubCell"/>
</dbReference>
<dbReference type="GO" id="GO:0045259">
    <property type="term" value="C:proton-transporting ATP synthase complex"/>
    <property type="evidence" value="ECO:0007669"/>
    <property type="project" value="UniProtKB-KW"/>
</dbReference>
<dbReference type="GO" id="GO:0033177">
    <property type="term" value="C:proton-transporting two-sector ATPase complex, proton-transporting domain"/>
    <property type="evidence" value="ECO:0007669"/>
    <property type="project" value="InterPro"/>
</dbReference>
<dbReference type="GO" id="GO:0008289">
    <property type="term" value="F:lipid binding"/>
    <property type="evidence" value="ECO:0007669"/>
    <property type="project" value="UniProtKB-KW"/>
</dbReference>
<dbReference type="GO" id="GO:0046933">
    <property type="term" value="F:proton-transporting ATP synthase activity, rotational mechanism"/>
    <property type="evidence" value="ECO:0007669"/>
    <property type="project" value="UniProtKB-UniRule"/>
</dbReference>
<dbReference type="GO" id="GO:0006814">
    <property type="term" value="P:sodium ion transport"/>
    <property type="evidence" value="ECO:0007669"/>
    <property type="project" value="UniProtKB-KW"/>
</dbReference>
<dbReference type="CDD" id="cd18184">
    <property type="entry name" value="ATP-synt_Fo_c_NaATPase"/>
    <property type="match status" value="1"/>
</dbReference>
<dbReference type="FunFam" id="1.20.20.10:FF:000002">
    <property type="entry name" value="ATP synthase subunit c"/>
    <property type="match status" value="1"/>
</dbReference>
<dbReference type="Gene3D" id="1.20.120.610">
    <property type="entry name" value="lithium bound rotor ring of v- atpase"/>
    <property type="match status" value="1"/>
</dbReference>
<dbReference type="HAMAP" id="MF_01396">
    <property type="entry name" value="ATP_synth_c_bact"/>
    <property type="match status" value="1"/>
</dbReference>
<dbReference type="InterPro" id="IPR005953">
    <property type="entry name" value="ATP_synth_csu_bac/chlpt"/>
</dbReference>
<dbReference type="InterPro" id="IPR000454">
    <property type="entry name" value="ATP_synth_F0_csu"/>
</dbReference>
<dbReference type="InterPro" id="IPR020537">
    <property type="entry name" value="ATP_synth_F0_csu_DDCD_BS"/>
</dbReference>
<dbReference type="InterPro" id="IPR002379">
    <property type="entry name" value="ATPase_proteolipid_c-like_dom"/>
</dbReference>
<dbReference type="InterPro" id="IPR035921">
    <property type="entry name" value="F/V-ATP_Csub_sf"/>
</dbReference>
<dbReference type="NCBIfam" id="TIGR01260">
    <property type="entry name" value="ATP_synt_c"/>
    <property type="match status" value="1"/>
</dbReference>
<dbReference type="PANTHER" id="PTHR10031">
    <property type="entry name" value="ATP SYNTHASE LIPID-BINDING PROTEIN, MITOCHONDRIAL"/>
    <property type="match status" value="1"/>
</dbReference>
<dbReference type="PANTHER" id="PTHR10031:SF0">
    <property type="entry name" value="ATPASE PROTEIN 9"/>
    <property type="match status" value="1"/>
</dbReference>
<dbReference type="Pfam" id="PF00137">
    <property type="entry name" value="ATP-synt_C"/>
    <property type="match status" value="1"/>
</dbReference>
<dbReference type="PRINTS" id="PR00124">
    <property type="entry name" value="ATPASEC"/>
</dbReference>
<dbReference type="SUPFAM" id="SSF81333">
    <property type="entry name" value="F1F0 ATP synthase subunit C"/>
    <property type="match status" value="1"/>
</dbReference>
<dbReference type="PROSITE" id="PS00605">
    <property type="entry name" value="ATPASE_C"/>
    <property type="match status" value="1"/>
</dbReference>
<name>ATPL_PROMO</name>
<reference key="1">
    <citation type="journal article" date="1990" name="Eur. J. Biochem.">
        <title>Sequence of subunit c of the sodium ion translocating adenosine triphosphate synthase of Propionigenium modestum.</title>
        <authorList>
            <person name="Ludwig W."/>
            <person name="Kaim G."/>
            <person name="Laubinger W."/>
            <person name="Dimroth P."/>
            <person name="Hoppe J."/>
            <person name="Schleifer K.H."/>
        </authorList>
    </citation>
    <scope>NUCLEOTIDE SEQUENCE [GENOMIC DNA]</scope>
    <scope>PROTEIN SEQUENCE OF 1-34</scope>
    <source>
        <strain>DSM 2376 / Gra Succ2</strain>
    </source>
</reference>
<reference key="2">
    <citation type="journal article" date="1992" name="Eur. J. Biochem.">
        <title>Cloning, sequencing and in vivo expression of genes encoding the F0 part of the sodium-ion-dependent ATP synthase of Propionigenium modestum in Escherichia coli.</title>
        <authorList>
            <person name="Kaim G.W."/>
            <person name="Ludwig W."/>
            <person name="Dimroth P."/>
            <person name="Schleifer K.H."/>
        </authorList>
    </citation>
    <scope>NUCLEOTIDE SEQUENCE [GENOMIC DNA]</scope>
    <source>
        <strain>DSM 2376 / Gra Succ2</strain>
    </source>
</reference>
<reference key="3">
    <citation type="journal article" date="1990" name="Nucleic Acids Res.">
        <title>Nucleotide sequence of the F0 subunits of the sodium dependent F1F0 ATPase of Propionigenium modestum.</title>
        <authorList>
            <person name="Esser U."/>
            <person name="Krumholz L.R."/>
            <person name="Simoni R.D."/>
        </authorList>
    </citation>
    <scope>NUCLEOTIDE SEQUENCE [GENOMIC DNA]</scope>
    <source>
        <strain>DSM 2376 / Gra Succ2</strain>
    </source>
</reference>
<reference key="4">
    <citation type="journal article" date="1993" name="FEBS Lett.">
        <title>N-terminal amino acid sequences of the subunits of the Na(+)-translocating F1F0 ATPase from Propionigenium modestum.</title>
        <authorList>
            <person name="Gerike U."/>
            <person name="Dimroth P."/>
        </authorList>
    </citation>
    <scope>PROTEIN SEQUENCE OF 1-7</scope>
</reference>
<reference key="5">
    <citation type="journal article" date="1992" name="FEMS Microbiol. Lett.">
        <title>Characterization of the genes coding for the F1F0 subunits of the sodium dependent ATPase of Propionigenium modestum.</title>
        <authorList>
            <person name="Krumholz L.R."/>
            <person name="Esser U."/>
            <person name="Simoni R.D."/>
        </authorList>
    </citation>
    <scope>DISCUSSION OF SEQUENCE</scope>
</reference>
<proteinExistence type="evidence at protein level"/>
<evidence type="ECO:0000250" key="1"/>
<evidence type="ECO:0000255" key="2"/>
<evidence type="ECO:0000305" key="3"/>
<organism>
    <name type="scientific">Propionigenium modestum</name>
    <dbReference type="NCBI Taxonomy" id="2333"/>
    <lineage>
        <taxon>Bacteria</taxon>
        <taxon>Fusobacteriati</taxon>
        <taxon>Fusobacteriota</taxon>
        <taxon>Fusobacteriia</taxon>
        <taxon>Fusobacteriales</taxon>
        <taxon>Fusobacteriaceae</taxon>
        <taxon>Propionigenium</taxon>
    </lineage>
</organism>
<comment type="function">
    <text>F(1)F(0) ATP synthase produces ATP from ADP in the presence of a proton or sodium gradient. F-type ATPases consist of two structural domains, F(1) containing the extramembraneous catalytic core and F(0) containing the membrane sodium channel, linked together by a central stalk and a peripheral stalk. During catalysis, ATP synthesis in the catalytic domain of F(1) is coupled via a rotary mechanism of the central stalk subunits to sodium translocation.</text>
</comment>
<comment type="function">
    <text evidence="3">Key component of the F(0) channel; it plays a direct role in translocation across the membrane. A homomeric c-ring of between 10-14 subunits forms the central stalk rotor element with the F(1) delta and epsilon subunits (Probable).</text>
</comment>
<comment type="subunit">
    <text evidence="1">F-type ATPases have 2 components, F(1) - the catalytic core - and F(0) - the membrane sodium channel. F(1) has five subunits: alpha(3), beta(3), gamma(1), delta(1), epsilon(1). F(0) has three main subunits: a(1), b(2) and c(10-14). The alpha and beta chains form an alternating ring which encloses part of the gamma chain. F(1) is attached to F(0) by a central stalk formed by the gamma and epsilon chains, while a peripheral stalk is formed by the delta and b chains (By similarity).</text>
</comment>
<comment type="subcellular location">
    <subcellularLocation>
        <location evidence="3">Cell membrane</location>
        <topology evidence="3">Multi-pass membrane protein</topology>
    </subcellularLocation>
</comment>
<comment type="miscellaneous">
    <text>The ATPase of P.modestum is of special interest because it uses sodium ions instead of protons as the physiological coupling ion.</text>
</comment>
<comment type="similarity">
    <text evidence="3">Belongs to the ATPase C chain family.</text>
</comment>
<keyword id="KW-0066">ATP synthesis</keyword>
<keyword id="KW-1003">Cell membrane</keyword>
<keyword id="KW-0138">CF(0)</keyword>
<keyword id="KW-0903">Direct protein sequencing</keyword>
<keyword id="KW-0375">Hydrogen ion transport</keyword>
<keyword id="KW-0406">Ion transport</keyword>
<keyword id="KW-0446">Lipid-binding</keyword>
<keyword id="KW-0472">Membrane</keyword>
<keyword id="KW-0915">Sodium</keyword>
<keyword id="KW-0739">Sodium transport</keyword>
<keyword id="KW-0812">Transmembrane</keyword>
<keyword id="KW-1133">Transmembrane helix</keyword>
<keyword id="KW-0813">Transport</keyword>